<feature type="signal peptide" evidence="2">
    <location>
        <begin position="1"/>
        <end position="31"/>
    </location>
</feature>
<feature type="chain" id="PRO_5005515681" description="Evasin P1229" evidence="2">
    <location>
        <begin position="32"/>
        <end position="108"/>
    </location>
</feature>
<feature type="region of interest" description="Disordered" evidence="4">
    <location>
        <begin position="88"/>
        <end position="108"/>
    </location>
</feature>
<feature type="compositionally biased region" description="Basic and acidic residues" evidence="4">
    <location>
        <begin position="99"/>
        <end position="108"/>
    </location>
</feature>
<feature type="glycosylation site" description="N-linked (GlcNAc...) asparagine" evidence="3">
    <location>
        <position position="44"/>
    </location>
</feature>
<feature type="glycosylation site" description="N-linked (GlcNAc...) asparagine" evidence="3">
    <location>
        <position position="91"/>
    </location>
</feature>
<feature type="disulfide bond" evidence="1">
    <location>
        <begin position="41"/>
        <end position="63"/>
    </location>
</feature>
<feature type="disulfide bond" evidence="1">
    <location>
        <begin position="45"/>
        <end position="65"/>
    </location>
</feature>
<feature type="disulfide bond" evidence="1">
    <location>
        <begin position="56"/>
        <end position="76"/>
    </location>
</feature>
<organism evidence="8">
    <name type="scientific">Ixodes ricinus</name>
    <name type="common">Common tick</name>
    <name type="synonym">Acarus ricinus</name>
    <dbReference type="NCBI Taxonomy" id="34613"/>
    <lineage>
        <taxon>Eukaryota</taxon>
        <taxon>Metazoa</taxon>
        <taxon>Ecdysozoa</taxon>
        <taxon>Arthropoda</taxon>
        <taxon>Chelicerata</taxon>
        <taxon>Arachnida</taxon>
        <taxon>Acari</taxon>
        <taxon>Parasitiformes</taxon>
        <taxon>Ixodida</taxon>
        <taxon>Ixodoidea</taxon>
        <taxon>Ixodidae</taxon>
        <taxon>Ixodinae</taxon>
        <taxon>Ixodes</taxon>
    </lineage>
</organism>
<comment type="function">
    <text evidence="5">Salivary chemokine-binding protein which binds to host chemokines CXCL1 and CXCL8.</text>
</comment>
<comment type="subcellular location">
    <subcellularLocation>
        <location evidence="7">Secreted</location>
    </subcellularLocation>
</comment>
<evidence type="ECO:0000250" key="1">
    <source>
        <dbReference type="UniProtKB" id="P0C8E8"/>
    </source>
</evidence>
<evidence type="ECO:0000255" key="2"/>
<evidence type="ECO:0000255" key="3">
    <source>
        <dbReference type="PROSITE-ProRule" id="PRU00498"/>
    </source>
</evidence>
<evidence type="ECO:0000256" key="4">
    <source>
        <dbReference type="SAM" id="MobiDB-lite"/>
    </source>
</evidence>
<evidence type="ECO:0000269" key="5">
    <source>
    </source>
</evidence>
<evidence type="ECO:0000303" key="6">
    <source>
    </source>
</evidence>
<evidence type="ECO:0000305" key="7"/>
<evidence type="ECO:0000312" key="8">
    <source>
        <dbReference type="EMBL" id="JAA66056.1"/>
    </source>
</evidence>
<reference evidence="8" key="1">
    <citation type="journal article" date="2013" name="FASEB J.">
        <title>De novo Ixodes ricinus salivary gland transcriptome analysis using two next-generation sequencing methodologies.</title>
        <authorList>
            <person name="Schwarz A."/>
            <person name="von Reumont B.M."/>
            <person name="Erhart J."/>
            <person name="Chagas A.C."/>
            <person name="Ribeiro J.M."/>
            <person name="Kotsyfakis M."/>
        </authorList>
    </citation>
    <scope>NUCLEOTIDE SEQUENCE [LARGE SCALE MRNA]</scope>
    <source>
        <tissue evidence="8">Salivary gland</tissue>
    </source>
</reference>
<reference evidence="7" key="2">
    <citation type="journal article" date="2019" name="J. Biol. Chem.">
        <title>A knottin scaffold directs the CXC-chemokine-binding specificity of tick evasins.</title>
        <authorList>
            <person name="Lee A.W."/>
            <person name="Deruaz M."/>
            <person name="Lynch C."/>
            <person name="Davies G."/>
            <person name="Singh K."/>
            <person name="Alenazi Y."/>
            <person name="Eaton J.R.O."/>
            <person name="Kawamura A."/>
            <person name="Shaw J."/>
            <person name="Proudfoot A.E.I."/>
            <person name="Dias J.M."/>
            <person name="Bhattacharya S."/>
        </authorList>
    </citation>
    <scope>FUNCTION</scope>
</reference>
<dbReference type="EMBL" id="GADI01007752">
    <property type="protein sequence ID" value="JAA66056.1"/>
    <property type="molecule type" value="mRNA"/>
</dbReference>
<dbReference type="GO" id="GO:0005576">
    <property type="term" value="C:extracellular region"/>
    <property type="evidence" value="ECO:0007669"/>
    <property type="project" value="UniProtKB-SubCell"/>
</dbReference>
<dbReference type="GO" id="GO:0019958">
    <property type="term" value="F:C-X-C chemokine binding"/>
    <property type="evidence" value="ECO:0000314"/>
    <property type="project" value="UniProtKB"/>
</dbReference>
<protein>
    <recommendedName>
        <fullName evidence="6">Evasin P1229</fullName>
    </recommendedName>
</protein>
<accession>A0A0K8R4R9</accession>
<proteinExistence type="inferred from homology"/>
<keyword id="KW-1015">Disulfide bond</keyword>
<keyword id="KW-0325">Glycoprotein</keyword>
<keyword id="KW-0964">Secreted</keyword>
<keyword id="KW-0732">Signal</keyword>
<sequence length="108" mass="11776">MEVRTFAFLQIVVFVALGIQLFAAVTDAADADDEFFTVDYCGMNCTLQQDGSWTPCTQKNAECKCYHESGSSVGLCLSTAYTDFNQFGDPNNSDLDAATPRHPDASSR</sequence>
<name>E1229_IXORI</name>